<proteinExistence type="inferred from homology"/>
<gene>
    <name type="ordered locus">Mal-023</name>
</gene>
<organism>
    <name type="scientific">African swine fever virus (isolate Tick/Malawi/Lil 20-1/1983)</name>
    <name type="common">ASFV</name>
    <dbReference type="NCBI Taxonomy" id="10500"/>
    <lineage>
        <taxon>Viruses</taxon>
        <taxon>Varidnaviria</taxon>
        <taxon>Bamfordvirae</taxon>
        <taxon>Nucleocytoviricota</taxon>
        <taxon>Pokkesviricetes</taxon>
        <taxon>Asfuvirales</taxon>
        <taxon>Asfarviridae</taxon>
        <taxon>Asfivirus</taxon>
        <taxon>African swine fever virus</taxon>
    </lineage>
</organism>
<feature type="chain" id="PRO_0000373229" description="Protein MGF 300-1L">
    <location>
        <begin position="1"/>
        <end position="268"/>
    </location>
</feature>
<feature type="topological domain" description="Cytoplasmic" evidence="2">
    <location>
        <begin position="1"/>
        <end position="175"/>
    </location>
</feature>
<feature type="transmembrane region" description="Helical" evidence="2">
    <location>
        <begin position="176"/>
        <end position="193"/>
    </location>
</feature>
<feature type="topological domain" description="Extracellular" evidence="2">
    <location>
        <begin position="194"/>
        <end position="268"/>
    </location>
</feature>
<sequence>MVSLTTYCLKNIVNQHAHVENTVLLYHLGLRWNCKTLYQCIQCNGVNYINSHSDQCKNKDLFLMKVIVKKNLAVARTLLSWGASPEYARLFCRNAEEEQALNLQHVADIPSSKILERLTMSYKENDEQLLITFYLLNLSTKFSTNLHEQVRFNIVSYIICDLAIHQTFKTFYAKNYSLSTLYCIFLAIYYKLYMALRKMVKIYPGLKPFAYLIGFMFDDETVTQTYSSTDDEILECKNKIIVIKGCYGNIHCRSDIDHMYAFSQNNFW</sequence>
<comment type="function">
    <text evidence="1">Plays a role in virus cell tropism, and may be required for efficient virus replication in macrophages.</text>
</comment>
<comment type="subcellular location">
    <subcellularLocation>
        <location evidence="3">Host membrane</location>
        <topology evidence="3">Single-pass membrane protein</topology>
    </subcellularLocation>
</comment>
<comment type="induction">
    <text evidence="3">Expressed in the early phase of the viral replicative cycle.</text>
</comment>
<comment type="similarity">
    <text evidence="3">Belongs to the asfivirus MGF 300 family.</text>
</comment>
<keyword id="KW-0244">Early protein</keyword>
<keyword id="KW-1043">Host membrane</keyword>
<keyword id="KW-0472">Membrane</keyword>
<keyword id="KW-0812">Transmembrane</keyword>
<keyword id="KW-1133">Transmembrane helix</keyword>
<protein>
    <recommendedName>
        <fullName>Protein MGF 300-1L</fullName>
    </recommendedName>
</protein>
<reference key="1">
    <citation type="submission" date="2003-03" db="EMBL/GenBank/DDBJ databases">
        <title>African swine fever virus genomes.</title>
        <authorList>
            <person name="Kutish G.F."/>
            <person name="Rock D.L."/>
        </authorList>
    </citation>
    <scope>NUCLEOTIDE SEQUENCE [LARGE SCALE GENOMIC DNA]</scope>
</reference>
<accession>P0C9K6</accession>
<name>3001L_ASFM2</name>
<organismHost>
    <name type="scientific">Ornithodoros</name>
    <name type="common">relapsing fever ticks</name>
    <dbReference type="NCBI Taxonomy" id="6937"/>
</organismHost>
<organismHost>
    <name type="scientific">Phacochoerus aethiopicus</name>
    <name type="common">Warthog</name>
    <dbReference type="NCBI Taxonomy" id="85517"/>
</organismHost>
<organismHost>
    <name type="scientific">Phacochoerus africanus</name>
    <name type="common">Warthog</name>
    <dbReference type="NCBI Taxonomy" id="41426"/>
</organismHost>
<organismHost>
    <name type="scientific">Potamochoerus larvatus</name>
    <name type="common">Bushpig</name>
    <dbReference type="NCBI Taxonomy" id="273792"/>
</organismHost>
<organismHost>
    <name type="scientific">Sus scrofa</name>
    <name type="common">Pig</name>
    <dbReference type="NCBI Taxonomy" id="9823"/>
</organismHost>
<evidence type="ECO:0000250" key="1"/>
<evidence type="ECO:0000255" key="2"/>
<evidence type="ECO:0000305" key="3"/>
<dbReference type="EMBL" id="AY261361">
    <property type="status" value="NOT_ANNOTATED_CDS"/>
    <property type="molecule type" value="Genomic_DNA"/>
</dbReference>
<dbReference type="Proteomes" id="UP000000860">
    <property type="component" value="Segment"/>
</dbReference>
<dbReference type="GO" id="GO:0033644">
    <property type="term" value="C:host cell membrane"/>
    <property type="evidence" value="ECO:0007669"/>
    <property type="project" value="UniProtKB-SubCell"/>
</dbReference>
<dbReference type="GO" id="GO:0016020">
    <property type="term" value="C:membrane"/>
    <property type="evidence" value="ECO:0007669"/>
    <property type="project" value="UniProtKB-KW"/>
</dbReference>